<name>NRDR_SHESH</name>
<feature type="chain" id="PRO_1000080830" description="Transcriptional repressor NrdR">
    <location>
        <begin position="1"/>
        <end position="149"/>
    </location>
</feature>
<feature type="domain" description="ATP-cone" evidence="1">
    <location>
        <begin position="49"/>
        <end position="139"/>
    </location>
</feature>
<feature type="zinc finger region" evidence="1">
    <location>
        <begin position="3"/>
        <end position="34"/>
    </location>
</feature>
<reference key="1">
    <citation type="submission" date="2007-08" db="EMBL/GenBank/DDBJ databases">
        <title>Complete sequence of Shewanella sediminis HAW-EB3.</title>
        <authorList>
            <consortium name="US DOE Joint Genome Institute"/>
            <person name="Copeland A."/>
            <person name="Lucas S."/>
            <person name="Lapidus A."/>
            <person name="Barry K."/>
            <person name="Glavina del Rio T."/>
            <person name="Dalin E."/>
            <person name="Tice H."/>
            <person name="Pitluck S."/>
            <person name="Chertkov O."/>
            <person name="Brettin T."/>
            <person name="Bruce D."/>
            <person name="Detter J.C."/>
            <person name="Han C."/>
            <person name="Schmutz J."/>
            <person name="Larimer F."/>
            <person name="Land M."/>
            <person name="Hauser L."/>
            <person name="Kyrpides N."/>
            <person name="Kim E."/>
            <person name="Zhao J.-S."/>
            <person name="Richardson P."/>
        </authorList>
    </citation>
    <scope>NUCLEOTIDE SEQUENCE [LARGE SCALE GENOMIC DNA]</scope>
    <source>
        <strain>HAW-EB3</strain>
    </source>
</reference>
<keyword id="KW-0067">ATP-binding</keyword>
<keyword id="KW-0238">DNA-binding</keyword>
<keyword id="KW-0479">Metal-binding</keyword>
<keyword id="KW-0547">Nucleotide-binding</keyword>
<keyword id="KW-1185">Reference proteome</keyword>
<keyword id="KW-0678">Repressor</keyword>
<keyword id="KW-0804">Transcription</keyword>
<keyword id="KW-0805">Transcription regulation</keyword>
<keyword id="KW-0862">Zinc</keyword>
<keyword id="KW-0863">Zinc-finger</keyword>
<dbReference type="EMBL" id="CP000821">
    <property type="protein sequence ID" value="ABV35883.1"/>
    <property type="molecule type" value="Genomic_DNA"/>
</dbReference>
<dbReference type="RefSeq" id="WP_012141619.1">
    <property type="nucleotide sequence ID" value="NC_009831.1"/>
</dbReference>
<dbReference type="SMR" id="A8FSR0"/>
<dbReference type="STRING" id="425104.Ssed_1272"/>
<dbReference type="KEGG" id="sse:Ssed_1272"/>
<dbReference type="eggNOG" id="COG1327">
    <property type="taxonomic scope" value="Bacteria"/>
</dbReference>
<dbReference type="HOGENOM" id="CLU_108412_0_0_6"/>
<dbReference type="OrthoDB" id="9807461at2"/>
<dbReference type="Proteomes" id="UP000002015">
    <property type="component" value="Chromosome"/>
</dbReference>
<dbReference type="GO" id="GO:0005524">
    <property type="term" value="F:ATP binding"/>
    <property type="evidence" value="ECO:0007669"/>
    <property type="project" value="UniProtKB-KW"/>
</dbReference>
<dbReference type="GO" id="GO:0003677">
    <property type="term" value="F:DNA binding"/>
    <property type="evidence" value="ECO:0007669"/>
    <property type="project" value="UniProtKB-KW"/>
</dbReference>
<dbReference type="GO" id="GO:0008270">
    <property type="term" value="F:zinc ion binding"/>
    <property type="evidence" value="ECO:0007669"/>
    <property type="project" value="UniProtKB-UniRule"/>
</dbReference>
<dbReference type="GO" id="GO:0045892">
    <property type="term" value="P:negative regulation of DNA-templated transcription"/>
    <property type="evidence" value="ECO:0007669"/>
    <property type="project" value="UniProtKB-UniRule"/>
</dbReference>
<dbReference type="HAMAP" id="MF_00440">
    <property type="entry name" value="NrdR"/>
    <property type="match status" value="1"/>
</dbReference>
<dbReference type="InterPro" id="IPR005144">
    <property type="entry name" value="ATP-cone_dom"/>
</dbReference>
<dbReference type="InterPro" id="IPR055173">
    <property type="entry name" value="NrdR-like_N"/>
</dbReference>
<dbReference type="InterPro" id="IPR003796">
    <property type="entry name" value="RNR_NrdR-like"/>
</dbReference>
<dbReference type="NCBIfam" id="TIGR00244">
    <property type="entry name" value="transcriptional regulator NrdR"/>
    <property type="match status" value="1"/>
</dbReference>
<dbReference type="PANTHER" id="PTHR30455">
    <property type="entry name" value="TRANSCRIPTIONAL REPRESSOR NRDR"/>
    <property type="match status" value="1"/>
</dbReference>
<dbReference type="PANTHER" id="PTHR30455:SF2">
    <property type="entry name" value="TRANSCRIPTIONAL REPRESSOR NRDR"/>
    <property type="match status" value="1"/>
</dbReference>
<dbReference type="Pfam" id="PF03477">
    <property type="entry name" value="ATP-cone"/>
    <property type="match status" value="1"/>
</dbReference>
<dbReference type="Pfam" id="PF22811">
    <property type="entry name" value="Zn_ribbon_NrdR"/>
    <property type="match status" value="1"/>
</dbReference>
<dbReference type="PROSITE" id="PS51161">
    <property type="entry name" value="ATP_CONE"/>
    <property type="match status" value="1"/>
</dbReference>
<sequence length="149" mass="17027">MHCPFCSATDTKVIDSRLVADGHQVRRRRECAECHERFTTFEGAELVMPRVVKQDGSRQPFDEEKLRGGMLRAVEKRPVSMDQIEQALTKIKSTLRATGEREVKSEMIGNLMMDQLVNLDKVAYIRFASVYRAFEDVSEFGDAIAKLQK</sequence>
<proteinExistence type="inferred from homology"/>
<gene>
    <name evidence="1" type="primary">nrdR</name>
    <name type="ordered locus">Ssed_1272</name>
</gene>
<accession>A8FSR0</accession>
<comment type="function">
    <text evidence="1">Negatively regulates transcription of bacterial ribonucleotide reductase nrd genes and operons by binding to NrdR-boxes.</text>
</comment>
<comment type="cofactor">
    <cofactor evidence="1">
        <name>Zn(2+)</name>
        <dbReference type="ChEBI" id="CHEBI:29105"/>
    </cofactor>
    <text evidence="1">Binds 1 zinc ion.</text>
</comment>
<comment type="similarity">
    <text evidence="1">Belongs to the NrdR family.</text>
</comment>
<organism>
    <name type="scientific">Shewanella sediminis (strain HAW-EB3)</name>
    <dbReference type="NCBI Taxonomy" id="425104"/>
    <lineage>
        <taxon>Bacteria</taxon>
        <taxon>Pseudomonadati</taxon>
        <taxon>Pseudomonadota</taxon>
        <taxon>Gammaproteobacteria</taxon>
        <taxon>Alteromonadales</taxon>
        <taxon>Shewanellaceae</taxon>
        <taxon>Shewanella</taxon>
    </lineage>
</organism>
<evidence type="ECO:0000255" key="1">
    <source>
        <dbReference type="HAMAP-Rule" id="MF_00440"/>
    </source>
</evidence>
<protein>
    <recommendedName>
        <fullName evidence="1">Transcriptional repressor NrdR</fullName>
    </recommendedName>
</protein>